<feature type="chain" id="PRO_1000164361" description="Chromosome-anchoring protein RacA">
    <location>
        <begin position="1"/>
        <end position="180"/>
    </location>
</feature>
<feature type="DNA-binding region" description="H-T-H motif" evidence="1">
    <location>
        <begin position="5"/>
        <end position="25"/>
    </location>
</feature>
<feature type="coiled-coil region" evidence="1">
    <location>
        <begin position="90"/>
        <end position="150"/>
    </location>
</feature>
<keyword id="KW-0131">Cell cycle</keyword>
<keyword id="KW-0132">Cell division</keyword>
<keyword id="KW-0159">Chromosome partition</keyword>
<keyword id="KW-0175">Coiled coil</keyword>
<keyword id="KW-0963">Cytoplasm</keyword>
<keyword id="KW-0238">DNA-binding</keyword>
<keyword id="KW-0749">Sporulation</keyword>
<reference key="1">
    <citation type="submission" date="2009-04" db="EMBL/GenBank/DDBJ databases">
        <title>Genome sequence of Bacillus anthracis A0248.</title>
        <authorList>
            <person name="Dodson R.J."/>
            <person name="Munk A.C."/>
            <person name="Bruce D."/>
            <person name="Detter C."/>
            <person name="Tapia R."/>
            <person name="Sutton G."/>
            <person name="Sims D."/>
            <person name="Brettin T."/>
        </authorList>
    </citation>
    <scope>NUCLEOTIDE SEQUENCE [LARGE SCALE GENOMIC DNA]</scope>
    <source>
        <strain>A0248</strain>
    </source>
</reference>
<dbReference type="EMBL" id="CP001598">
    <property type="protein sequence ID" value="ACQ47506.1"/>
    <property type="molecule type" value="Genomic_DNA"/>
</dbReference>
<dbReference type="RefSeq" id="WP_000456010.1">
    <property type="nucleotide sequence ID" value="NC_012659.1"/>
</dbReference>
<dbReference type="SMR" id="C3P8Z9"/>
<dbReference type="GeneID" id="45022176"/>
<dbReference type="KEGG" id="bai:BAA_2351"/>
<dbReference type="HOGENOM" id="CLU_111022_0_0_9"/>
<dbReference type="GO" id="GO:0005737">
    <property type="term" value="C:cytoplasm"/>
    <property type="evidence" value="ECO:0007669"/>
    <property type="project" value="UniProtKB-SubCell"/>
</dbReference>
<dbReference type="GO" id="GO:0003690">
    <property type="term" value="F:double-stranded DNA binding"/>
    <property type="evidence" value="ECO:0007669"/>
    <property type="project" value="UniProtKB-UniRule"/>
</dbReference>
<dbReference type="GO" id="GO:0008356">
    <property type="term" value="P:asymmetric cell division"/>
    <property type="evidence" value="ECO:0007669"/>
    <property type="project" value="UniProtKB-UniRule"/>
</dbReference>
<dbReference type="GO" id="GO:0030261">
    <property type="term" value="P:chromosome condensation"/>
    <property type="evidence" value="ECO:0007669"/>
    <property type="project" value="UniProtKB-UniRule"/>
</dbReference>
<dbReference type="GO" id="GO:0007059">
    <property type="term" value="P:chromosome segregation"/>
    <property type="evidence" value="ECO:0007669"/>
    <property type="project" value="UniProtKB-UniRule"/>
</dbReference>
<dbReference type="GO" id="GO:0030435">
    <property type="term" value="P:sporulation resulting in formation of a cellular spore"/>
    <property type="evidence" value="ECO:0007669"/>
    <property type="project" value="UniProtKB-UniRule"/>
</dbReference>
<dbReference type="Gene3D" id="1.10.1660.10">
    <property type="match status" value="1"/>
</dbReference>
<dbReference type="HAMAP" id="MF_01170">
    <property type="entry name" value="RacA"/>
    <property type="match status" value="1"/>
</dbReference>
<dbReference type="InterPro" id="IPR023522">
    <property type="entry name" value="Chrosome_anchoring_RacA"/>
</dbReference>
<dbReference type="NCBIfam" id="NF009646">
    <property type="entry name" value="PRK13182.1-1"/>
    <property type="match status" value="1"/>
</dbReference>
<dbReference type="SUPFAM" id="SSF58064">
    <property type="entry name" value="Influenza hemagglutinin (stalk)"/>
    <property type="match status" value="1"/>
</dbReference>
<name>RACA_BACAA</name>
<protein>
    <recommendedName>
        <fullName evidence="1">Chromosome-anchoring protein RacA</fullName>
    </recommendedName>
</protein>
<gene>
    <name evidence="1" type="primary">racA</name>
    <name type="ordered locus">BAA_2351</name>
</gene>
<organism>
    <name type="scientific">Bacillus anthracis (strain A0248)</name>
    <dbReference type="NCBI Taxonomy" id="592021"/>
    <lineage>
        <taxon>Bacteria</taxon>
        <taxon>Bacillati</taxon>
        <taxon>Bacillota</taxon>
        <taxon>Bacilli</taxon>
        <taxon>Bacillales</taxon>
        <taxon>Bacillaceae</taxon>
        <taxon>Bacillus</taxon>
        <taxon>Bacillus cereus group</taxon>
    </lineage>
</organism>
<sequence length="180" mass="21311">MEYKTPFIAKKLGVSPKAVVRIAQQLNLTIEKNKYGHFIFTQDDLDQMLEYHRSQIEQSQNTHPTQKTSSNDVEELKTQVNTIVQNISSHDFEQLAAQLNTITRRLDRMEEQMQDKANDVVTYQLLQHRREMEEMLERIQKLEAGLKKEEPIYITPDTKPTYEREKKPKRRKMIFSIFGL</sequence>
<comment type="function">
    <text evidence="1">Required for the formation of axial filaments and for anchoring the origin regions at the cell poles in sporulating cells, thus ensuring proper chromosome segregation in the prespore. Binds in a dispersed manner throughout the chromosome but preferentially to sites clustered in the origin portion of the chromosome, causing condensation of the chromosome and its remodeling into an elongated, anchored structure.</text>
</comment>
<comment type="subcellular location">
    <subcellularLocation>
        <location evidence="1">Cytoplasm</location>
    </subcellularLocation>
    <text evidence="1">Localizes to cell poles and nucleoid.</text>
</comment>
<comment type="similarity">
    <text evidence="1">Belongs to the RacA family.</text>
</comment>
<evidence type="ECO:0000255" key="1">
    <source>
        <dbReference type="HAMAP-Rule" id="MF_01170"/>
    </source>
</evidence>
<proteinExistence type="inferred from homology"/>
<accession>C3P8Z9</accession>